<reference key="1">
    <citation type="journal article" date="2004" name="Nat. Genet.">
        <title>Evidence in the Legionella pneumophila genome for exploitation of host cell functions and high genome plasticity.</title>
        <authorList>
            <person name="Cazalet C."/>
            <person name="Rusniok C."/>
            <person name="Brueggemann H."/>
            <person name="Zidane N."/>
            <person name="Magnier A."/>
            <person name="Ma L."/>
            <person name="Tichit M."/>
            <person name="Jarraud S."/>
            <person name="Bouchier C."/>
            <person name="Vandenesch F."/>
            <person name="Kunst F."/>
            <person name="Etienne J."/>
            <person name="Glaser P."/>
            <person name="Buchrieser C."/>
        </authorList>
    </citation>
    <scope>NUCLEOTIDE SEQUENCE [LARGE SCALE GENOMIC DNA]</scope>
    <source>
        <strain>Lens</strain>
    </source>
</reference>
<keyword id="KW-0030">Aminoacyl-tRNA synthetase</keyword>
<keyword id="KW-0067">ATP-binding</keyword>
<keyword id="KW-0963">Cytoplasm</keyword>
<keyword id="KW-0436">Ligase</keyword>
<keyword id="KW-0479">Metal-binding</keyword>
<keyword id="KW-0547">Nucleotide-binding</keyword>
<keyword id="KW-0648">Protein biosynthesis</keyword>
<keyword id="KW-0862">Zinc</keyword>
<feature type="chain" id="PRO_0000098405" description="Isoleucine--tRNA ligase">
    <location>
        <begin position="1"/>
        <end position="931"/>
    </location>
</feature>
<feature type="short sequence motif" description="'HIGH' region">
    <location>
        <begin position="58"/>
        <end position="68"/>
    </location>
</feature>
<feature type="short sequence motif" description="'KMSKS' region">
    <location>
        <begin position="600"/>
        <end position="604"/>
    </location>
</feature>
<feature type="binding site" evidence="1">
    <location>
        <position position="559"/>
    </location>
    <ligand>
        <name>L-isoleucyl-5'-AMP</name>
        <dbReference type="ChEBI" id="CHEBI:178002"/>
    </ligand>
</feature>
<feature type="binding site" evidence="1">
    <location>
        <position position="603"/>
    </location>
    <ligand>
        <name>ATP</name>
        <dbReference type="ChEBI" id="CHEBI:30616"/>
    </ligand>
</feature>
<feature type="binding site" evidence="1">
    <location>
        <position position="894"/>
    </location>
    <ligand>
        <name>Zn(2+)</name>
        <dbReference type="ChEBI" id="CHEBI:29105"/>
    </ligand>
</feature>
<feature type="binding site" evidence="1">
    <location>
        <position position="897"/>
    </location>
    <ligand>
        <name>Zn(2+)</name>
        <dbReference type="ChEBI" id="CHEBI:29105"/>
    </ligand>
</feature>
<feature type="binding site" evidence="1">
    <location>
        <position position="914"/>
    </location>
    <ligand>
        <name>Zn(2+)</name>
        <dbReference type="ChEBI" id="CHEBI:29105"/>
    </ligand>
</feature>
<feature type="binding site" evidence="1">
    <location>
        <position position="917"/>
    </location>
    <ligand>
        <name>Zn(2+)</name>
        <dbReference type="ChEBI" id="CHEBI:29105"/>
    </ligand>
</feature>
<accession>Q5WXX1</accession>
<dbReference type="EC" id="6.1.1.5" evidence="1"/>
<dbReference type="EMBL" id="CR628337">
    <property type="protein sequence ID" value="CAH15202.1"/>
    <property type="molecule type" value="Genomic_DNA"/>
</dbReference>
<dbReference type="RefSeq" id="WP_011215103.1">
    <property type="nucleotide sequence ID" value="NC_006369.1"/>
</dbReference>
<dbReference type="SMR" id="Q5WXX1"/>
<dbReference type="KEGG" id="lpf:lpl0968"/>
<dbReference type="LegioList" id="lpl0968"/>
<dbReference type="HOGENOM" id="CLU_001493_7_1_6"/>
<dbReference type="Proteomes" id="UP000002517">
    <property type="component" value="Chromosome"/>
</dbReference>
<dbReference type="GO" id="GO:0005829">
    <property type="term" value="C:cytosol"/>
    <property type="evidence" value="ECO:0007669"/>
    <property type="project" value="TreeGrafter"/>
</dbReference>
<dbReference type="GO" id="GO:0002161">
    <property type="term" value="F:aminoacyl-tRNA deacylase activity"/>
    <property type="evidence" value="ECO:0007669"/>
    <property type="project" value="InterPro"/>
</dbReference>
<dbReference type="GO" id="GO:0005524">
    <property type="term" value="F:ATP binding"/>
    <property type="evidence" value="ECO:0007669"/>
    <property type="project" value="UniProtKB-UniRule"/>
</dbReference>
<dbReference type="GO" id="GO:0004822">
    <property type="term" value="F:isoleucine-tRNA ligase activity"/>
    <property type="evidence" value="ECO:0007669"/>
    <property type="project" value="UniProtKB-UniRule"/>
</dbReference>
<dbReference type="GO" id="GO:0000049">
    <property type="term" value="F:tRNA binding"/>
    <property type="evidence" value="ECO:0007669"/>
    <property type="project" value="InterPro"/>
</dbReference>
<dbReference type="GO" id="GO:0008270">
    <property type="term" value="F:zinc ion binding"/>
    <property type="evidence" value="ECO:0007669"/>
    <property type="project" value="UniProtKB-UniRule"/>
</dbReference>
<dbReference type="GO" id="GO:0006428">
    <property type="term" value="P:isoleucyl-tRNA aminoacylation"/>
    <property type="evidence" value="ECO:0007669"/>
    <property type="project" value="UniProtKB-UniRule"/>
</dbReference>
<dbReference type="CDD" id="cd07960">
    <property type="entry name" value="Anticodon_Ia_Ile_BEm"/>
    <property type="match status" value="1"/>
</dbReference>
<dbReference type="CDD" id="cd00818">
    <property type="entry name" value="IleRS_core"/>
    <property type="match status" value="1"/>
</dbReference>
<dbReference type="FunFam" id="1.10.730.20:FF:000001">
    <property type="entry name" value="Isoleucine--tRNA ligase"/>
    <property type="match status" value="1"/>
</dbReference>
<dbReference type="FunFam" id="3.40.50.620:FF:000042">
    <property type="entry name" value="Isoleucine--tRNA ligase"/>
    <property type="match status" value="1"/>
</dbReference>
<dbReference type="FunFam" id="3.40.50.620:FF:000048">
    <property type="entry name" value="Isoleucine--tRNA ligase"/>
    <property type="match status" value="1"/>
</dbReference>
<dbReference type="Gene3D" id="1.10.730.20">
    <property type="match status" value="1"/>
</dbReference>
<dbReference type="Gene3D" id="3.40.50.620">
    <property type="entry name" value="HUPs"/>
    <property type="match status" value="2"/>
</dbReference>
<dbReference type="Gene3D" id="1.10.10.830">
    <property type="entry name" value="Ile-tRNA synthetase CP2 domain-like"/>
    <property type="match status" value="1"/>
</dbReference>
<dbReference type="Gene3D" id="3.90.740.10">
    <property type="entry name" value="Valyl/Leucyl/Isoleucyl-tRNA synthetase, editing domain"/>
    <property type="match status" value="1"/>
</dbReference>
<dbReference type="HAMAP" id="MF_02002">
    <property type="entry name" value="Ile_tRNA_synth_type1"/>
    <property type="match status" value="1"/>
</dbReference>
<dbReference type="InterPro" id="IPR001412">
    <property type="entry name" value="aa-tRNA-synth_I_CS"/>
</dbReference>
<dbReference type="InterPro" id="IPR002300">
    <property type="entry name" value="aa-tRNA-synth_Ia"/>
</dbReference>
<dbReference type="InterPro" id="IPR033708">
    <property type="entry name" value="Anticodon_Ile_BEm"/>
</dbReference>
<dbReference type="InterPro" id="IPR002301">
    <property type="entry name" value="Ile-tRNA-ligase"/>
</dbReference>
<dbReference type="InterPro" id="IPR023585">
    <property type="entry name" value="Ile-tRNA-ligase_type1"/>
</dbReference>
<dbReference type="InterPro" id="IPR050081">
    <property type="entry name" value="Ile-tRNA_ligase"/>
</dbReference>
<dbReference type="InterPro" id="IPR013155">
    <property type="entry name" value="M/V/L/I-tRNA-synth_anticd-bd"/>
</dbReference>
<dbReference type="InterPro" id="IPR014729">
    <property type="entry name" value="Rossmann-like_a/b/a_fold"/>
</dbReference>
<dbReference type="InterPro" id="IPR009080">
    <property type="entry name" value="tRNAsynth_Ia_anticodon-bd"/>
</dbReference>
<dbReference type="InterPro" id="IPR009008">
    <property type="entry name" value="Val/Leu/Ile-tRNA-synth_edit"/>
</dbReference>
<dbReference type="InterPro" id="IPR010663">
    <property type="entry name" value="Znf_FPG/IleRS"/>
</dbReference>
<dbReference type="NCBIfam" id="TIGR00392">
    <property type="entry name" value="ileS"/>
    <property type="match status" value="1"/>
</dbReference>
<dbReference type="PANTHER" id="PTHR42765:SF1">
    <property type="entry name" value="ISOLEUCINE--TRNA LIGASE, MITOCHONDRIAL"/>
    <property type="match status" value="1"/>
</dbReference>
<dbReference type="PANTHER" id="PTHR42765">
    <property type="entry name" value="SOLEUCYL-TRNA SYNTHETASE"/>
    <property type="match status" value="1"/>
</dbReference>
<dbReference type="Pfam" id="PF08264">
    <property type="entry name" value="Anticodon_1"/>
    <property type="match status" value="1"/>
</dbReference>
<dbReference type="Pfam" id="PF00133">
    <property type="entry name" value="tRNA-synt_1"/>
    <property type="match status" value="1"/>
</dbReference>
<dbReference type="Pfam" id="PF06827">
    <property type="entry name" value="zf-FPG_IleRS"/>
    <property type="match status" value="1"/>
</dbReference>
<dbReference type="PRINTS" id="PR00984">
    <property type="entry name" value="TRNASYNTHILE"/>
</dbReference>
<dbReference type="SUPFAM" id="SSF47323">
    <property type="entry name" value="Anticodon-binding domain of a subclass of class I aminoacyl-tRNA synthetases"/>
    <property type="match status" value="1"/>
</dbReference>
<dbReference type="SUPFAM" id="SSF52374">
    <property type="entry name" value="Nucleotidylyl transferase"/>
    <property type="match status" value="1"/>
</dbReference>
<dbReference type="SUPFAM" id="SSF50677">
    <property type="entry name" value="ValRS/IleRS/LeuRS editing domain"/>
    <property type="match status" value="1"/>
</dbReference>
<dbReference type="PROSITE" id="PS00178">
    <property type="entry name" value="AA_TRNA_LIGASE_I"/>
    <property type="match status" value="1"/>
</dbReference>
<sequence length="931" mass="105735">MAEYKDTLNLPNTSFPMKASLSVREPEMLADWQAKGIYQKIRKARVGSKRFILHDGPPYANGHLHCGHALNKILKDIIIKSKTFSGFDAPFVPGWDCHGLPIELNVEKKVGKAGSKISPREFRAKCREYAASQIDIQRDEFQRLGVLGDWYNPYVTMDYHYEANIVRALGLMIKNGHLQQGFKPVHWCIDCGSALAEAEVDYEDKTSPSIDVAFSAVNPSEFLNCFGNQLAVKPLILPIWTTTPWTLPANEAVCLHPEIDYALIDADNSYYIVATDLVESVMARYGISHYKTSGSAKGRVFEHFKLQHPFYKRQVPVVLAEHVTTESGTGSVHTAPAHGPDDYLVGQFYQLPLINPVMANGCFAENVELFAGISVLKANETILAVLSERNVLLASESIRHSYPHCWRHKSPMIFLATPQWFISMDKSNLRQAIINEIDKVNWVPDWGKARISNMVENRPDWCISRQRSWGTPMPLFVHKTTRELHPDTLELIEKVAVMIEKSGIDAWFDLDSSELLGDDAKHYDKITDTMDVWLDSGISHYSVLKHNNDLDFPADVYFEGSDQHRGWFNSSLTTAVAMYGVAPYKTVLTHGYTVDAEGKKLSKSKGNYVALDKLVNQHGADILRLWVASTDYRHEVSISEEIIKRNADAYRRIRNTARFLLANLFDFNPASDCIDAKELLELDRWALKRCQLLQEEIITAYDNYHFHLIYQKIHNFCAVDMGSFYLDLIKDRQYTTAKDSIARRSCQTAMYHMVKAFTIWLAPILSFTAEEIWQTIPGNNSESIFIEHWYDAWPTIDAVNMEDWEQLHIVRDEVNKALEETRQRGEIGSALAAEVTVYADAKALPKLTRLGEELRFLFITSEAKACPISQSPKGLAVTDCGVSIQVTASAHEKCARCWHRREDVGQNQEHPELCLRCVGNISGYHEERLYI</sequence>
<proteinExistence type="inferred from homology"/>
<comment type="function">
    <text evidence="1">Catalyzes the attachment of isoleucine to tRNA(Ile). As IleRS can inadvertently accommodate and process structurally similar amino acids such as valine, to avoid such errors it has two additional distinct tRNA(Ile)-dependent editing activities. One activity is designated as 'pretransfer' editing and involves the hydrolysis of activated Val-AMP. The other activity is designated 'posttransfer' editing and involves deacylation of mischarged Val-tRNA(Ile).</text>
</comment>
<comment type="catalytic activity">
    <reaction evidence="1">
        <text>tRNA(Ile) + L-isoleucine + ATP = L-isoleucyl-tRNA(Ile) + AMP + diphosphate</text>
        <dbReference type="Rhea" id="RHEA:11060"/>
        <dbReference type="Rhea" id="RHEA-COMP:9666"/>
        <dbReference type="Rhea" id="RHEA-COMP:9695"/>
        <dbReference type="ChEBI" id="CHEBI:30616"/>
        <dbReference type="ChEBI" id="CHEBI:33019"/>
        <dbReference type="ChEBI" id="CHEBI:58045"/>
        <dbReference type="ChEBI" id="CHEBI:78442"/>
        <dbReference type="ChEBI" id="CHEBI:78528"/>
        <dbReference type="ChEBI" id="CHEBI:456215"/>
        <dbReference type="EC" id="6.1.1.5"/>
    </reaction>
</comment>
<comment type="cofactor">
    <cofactor evidence="1">
        <name>Zn(2+)</name>
        <dbReference type="ChEBI" id="CHEBI:29105"/>
    </cofactor>
    <text evidence="1">Binds 1 zinc ion per subunit.</text>
</comment>
<comment type="subunit">
    <text evidence="1">Monomer.</text>
</comment>
<comment type="subcellular location">
    <subcellularLocation>
        <location evidence="1">Cytoplasm</location>
    </subcellularLocation>
</comment>
<comment type="domain">
    <text evidence="1">IleRS has two distinct active sites: one for aminoacylation and one for editing. The misactivated valine is translocated from the active site to the editing site, which sterically excludes the correctly activated isoleucine. The single editing site contains two valyl binding pockets, one specific for each substrate (Val-AMP or Val-tRNA(Ile)).</text>
</comment>
<comment type="similarity">
    <text evidence="1">Belongs to the class-I aminoacyl-tRNA synthetase family. IleS type 1 subfamily.</text>
</comment>
<organism>
    <name type="scientific">Legionella pneumophila (strain Lens)</name>
    <dbReference type="NCBI Taxonomy" id="297245"/>
    <lineage>
        <taxon>Bacteria</taxon>
        <taxon>Pseudomonadati</taxon>
        <taxon>Pseudomonadota</taxon>
        <taxon>Gammaproteobacteria</taxon>
        <taxon>Legionellales</taxon>
        <taxon>Legionellaceae</taxon>
        <taxon>Legionella</taxon>
    </lineage>
</organism>
<protein>
    <recommendedName>
        <fullName evidence="1">Isoleucine--tRNA ligase</fullName>
        <ecNumber evidence="1">6.1.1.5</ecNumber>
    </recommendedName>
    <alternativeName>
        <fullName evidence="1">Isoleucyl-tRNA synthetase</fullName>
        <shortName evidence="1">IleRS</shortName>
    </alternativeName>
</protein>
<evidence type="ECO:0000255" key="1">
    <source>
        <dbReference type="HAMAP-Rule" id="MF_02002"/>
    </source>
</evidence>
<gene>
    <name evidence="1" type="primary">ileS</name>
    <name type="ordered locus">lpl0968</name>
</gene>
<name>SYI_LEGPL</name>